<accession>Q6ENF2</accession>
<comment type="subcellular location">
    <subcellularLocation>
        <location>Plastid</location>
        <location>Chloroplast</location>
    </subcellularLocation>
</comment>
<comment type="similarity">
    <text evidence="1">Belongs to the bacterial ribosomal protein bL33 family.</text>
</comment>
<dbReference type="EMBL" id="AP006728">
    <property type="protein sequence ID" value="BAD26800.1"/>
    <property type="molecule type" value="Genomic_DNA"/>
</dbReference>
<dbReference type="RefSeq" id="YP_052771.1">
    <property type="nucleotide sequence ID" value="NC_005973.1"/>
</dbReference>
<dbReference type="STRING" id="4536.Q6ENF2"/>
<dbReference type="GeneID" id="2885944"/>
<dbReference type="Proteomes" id="UP000006591">
    <property type="component" value="Chloroplast"/>
</dbReference>
<dbReference type="GO" id="GO:0009507">
    <property type="term" value="C:chloroplast"/>
    <property type="evidence" value="ECO:0007669"/>
    <property type="project" value="UniProtKB-SubCell"/>
</dbReference>
<dbReference type="GO" id="GO:0009536">
    <property type="term" value="C:plastid"/>
    <property type="evidence" value="ECO:0000305"/>
    <property type="project" value="Gramene"/>
</dbReference>
<dbReference type="GO" id="GO:1990904">
    <property type="term" value="C:ribonucleoprotein complex"/>
    <property type="evidence" value="ECO:0007669"/>
    <property type="project" value="UniProtKB-KW"/>
</dbReference>
<dbReference type="GO" id="GO:0005840">
    <property type="term" value="C:ribosome"/>
    <property type="evidence" value="ECO:0007669"/>
    <property type="project" value="UniProtKB-KW"/>
</dbReference>
<dbReference type="GO" id="GO:0003735">
    <property type="term" value="F:structural constituent of ribosome"/>
    <property type="evidence" value="ECO:0007669"/>
    <property type="project" value="InterPro"/>
</dbReference>
<dbReference type="GO" id="GO:0006412">
    <property type="term" value="P:translation"/>
    <property type="evidence" value="ECO:0007669"/>
    <property type="project" value="UniProtKB-UniRule"/>
</dbReference>
<dbReference type="Gene3D" id="2.20.28.120">
    <property type="entry name" value="Ribosomal protein L33"/>
    <property type="match status" value="1"/>
</dbReference>
<dbReference type="HAMAP" id="MF_00294">
    <property type="entry name" value="Ribosomal_bL33"/>
    <property type="match status" value="1"/>
</dbReference>
<dbReference type="InterPro" id="IPR001705">
    <property type="entry name" value="Ribosomal_bL33"/>
</dbReference>
<dbReference type="InterPro" id="IPR018264">
    <property type="entry name" value="Ribosomal_bL33_CS"/>
</dbReference>
<dbReference type="InterPro" id="IPR038584">
    <property type="entry name" value="Ribosomal_bL33_sf"/>
</dbReference>
<dbReference type="InterPro" id="IPR011332">
    <property type="entry name" value="Ribosomal_zn-bd"/>
</dbReference>
<dbReference type="NCBIfam" id="NF001764">
    <property type="entry name" value="PRK00504.1"/>
    <property type="match status" value="1"/>
</dbReference>
<dbReference type="NCBIfam" id="NF001860">
    <property type="entry name" value="PRK00595.1"/>
    <property type="match status" value="1"/>
</dbReference>
<dbReference type="NCBIfam" id="TIGR01023">
    <property type="entry name" value="rpmG_bact"/>
    <property type="match status" value="1"/>
</dbReference>
<dbReference type="PANTHER" id="PTHR43168">
    <property type="entry name" value="50S RIBOSOMAL PROTEIN L33, CHLOROPLASTIC"/>
    <property type="match status" value="1"/>
</dbReference>
<dbReference type="PANTHER" id="PTHR43168:SF2">
    <property type="entry name" value="LARGE RIBOSOMAL SUBUNIT PROTEIN BL33C"/>
    <property type="match status" value="1"/>
</dbReference>
<dbReference type="Pfam" id="PF00471">
    <property type="entry name" value="Ribosomal_L33"/>
    <property type="match status" value="1"/>
</dbReference>
<dbReference type="SUPFAM" id="SSF57829">
    <property type="entry name" value="Zn-binding ribosomal proteins"/>
    <property type="match status" value="1"/>
</dbReference>
<dbReference type="PROSITE" id="PS00582">
    <property type="entry name" value="RIBOSOMAL_L33"/>
    <property type="match status" value="1"/>
</dbReference>
<feature type="chain" id="PRO_0000170292" description="Large ribosomal subunit protein bL33c">
    <location>
        <begin position="1"/>
        <end position="66"/>
    </location>
</feature>
<gene>
    <name evidence="1" type="primary">rpl33</name>
</gene>
<evidence type="ECO:0000255" key="1">
    <source>
        <dbReference type="HAMAP-Rule" id="MF_00294"/>
    </source>
</evidence>
<evidence type="ECO:0000305" key="2"/>
<evidence type="ECO:0000312" key="3">
    <source>
        <dbReference type="Proteomes" id="UP000006591"/>
    </source>
</evidence>
<organism>
    <name type="scientific">Oryza nivara</name>
    <name type="common">Indian wild rice</name>
    <name type="synonym">Oryza sativa f. spontanea</name>
    <dbReference type="NCBI Taxonomy" id="4536"/>
    <lineage>
        <taxon>Eukaryota</taxon>
        <taxon>Viridiplantae</taxon>
        <taxon>Streptophyta</taxon>
        <taxon>Embryophyta</taxon>
        <taxon>Tracheophyta</taxon>
        <taxon>Spermatophyta</taxon>
        <taxon>Magnoliopsida</taxon>
        <taxon>Liliopsida</taxon>
        <taxon>Poales</taxon>
        <taxon>Poaceae</taxon>
        <taxon>BOP clade</taxon>
        <taxon>Oryzoideae</taxon>
        <taxon>Oryzeae</taxon>
        <taxon>Oryzinae</taxon>
        <taxon>Oryza</taxon>
    </lineage>
</organism>
<proteinExistence type="inferred from homology"/>
<sequence length="66" mass="7643">MAKGKDVRIRVILQCVSCVRKGANEESAGISRYSTQKNRHNTPGQLELRKFCRYCRKHTIHAEIKK</sequence>
<keyword id="KW-0150">Chloroplast</keyword>
<keyword id="KW-0934">Plastid</keyword>
<keyword id="KW-1185">Reference proteome</keyword>
<keyword id="KW-0687">Ribonucleoprotein</keyword>
<keyword id="KW-0689">Ribosomal protein</keyword>
<geneLocation type="chloroplast"/>
<protein>
    <recommendedName>
        <fullName evidence="1">Large ribosomal subunit protein bL33c</fullName>
    </recommendedName>
    <alternativeName>
        <fullName evidence="2">50S ribosomal protein L33, chloroplastic</fullName>
    </alternativeName>
</protein>
<reference key="1">
    <citation type="journal article" date="2004" name="Gene">
        <title>The complete nucleotide sequence of wild rice (Oryza nivara) chloroplast genome: first genome wide comparative sequence analysis of wild and cultivated rice.</title>
        <authorList>
            <person name="Masood M.S."/>
            <person name="Nishikawa T."/>
            <person name="Fukuoka S."/>
            <person name="Njenga P.K."/>
            <person name="Tsudzuki T."/>
            <person name="Kadowaki K."/>
        </authorList>
    </citation>
    <scope>NUCLEOTIDE SEQUENCE [LARGE SCALE GENOMIC DNA]</scope>
    <source>
        <strain evidence="3">cv. SL10</strain>
    </source>
</reference>
<name>RK33_ORYNI</name>